<accession>Q6XK22</accession>
<evidence type="ECO:0000250" key="1"/>
<evidence type="ECO:0000255" key="2"/>
<evidence type="ECO:0000269" key="3">
    <source>
    </source>
</evidence>
<evidence type="ECO:0000305" key="4"/>
<sequence length="237" mass="26317">MVKEECKALLDALSRVTACYRHMVLTIGGTSDSQNLREELKKTRQKAQELAVANRNKLTTVLRDKTVSKEDKAEFERLWVIFSTCLEILEIDMRRALELGHEFPLNVPKKHLIQTGMSGGTSGVAARAMSVQNMKYEAEHNIDVVDLKDLENEINQVGEMMYEMEMKVNVPQWTVEAKQDPGAELKSTISVGASSIGMISVEENKSFCDISKVLAGIIFSAVLIIAIVLAVCVVKLS</sequence>
<comment type="function">
    <text>Regulator of G protein-coupled receptor (GPCR) signaling. Probably acts by regulating the activity of some 'R7' family protein (RGS6, RGS7, RGS9 and/or RGS11).</text>
</comment>
<comment type="subcellular location">
    <subcellularLocation>
        <location evidence="1">Membrane</location>
        <topology evidence="1">Single-pass type IV membrane protein</topology>
    </subcellularLocation>
</comment>
<comment type="tissue specificity">
    <text evidence="3">Expressed in a variety of neuronal tissues, particularly in sensory cells including inner ear hair cells, photoreceptors and dorsal root ganglion neurons.</text>
</comment>
<comment type="similarity">
    <text evidence="4">Belongs to the RGS7BP/RGS9BP family.</text>
</comment>
<keyword id="KW-0175">Coiled coil</keyword>
<keyword id="KW-0472">Membrane</keyword>
<keyword id="KW-1185">Reference proteome</keyword>
<keyword id="KW-0734">Signal transduction inhibitor</keyword>
<keyword id="KW-0812">Transmembrane</keyword>
<keyword id="KW-1133">Transmembrane helix</keyword>
<dbReference type="EMBL" id="AY229887">
    <property type="protein sequence ID" value="AAP55846.1"/>
    <property type="molecule type" value="mRNA"/>
</dbReference>
<dbReference type="RefSeq" id="NP_989836.1">
    <property type="nucleotide sequence ID" value="NM_204505.1"/>
</dbReference>
<dbReference type="SMR" id="Q6XK22"/>
<dbReference type="FunCoup" id="Q6XK22">
    <property type="interactions" value="284"/>
</dbReference>
<dbReference type="STRING" id="9031.ENSGALP00000007438"/>
<dbReference type="PaxDb" id="9031-ENSGALP00000007438"/>
<dbReference type="GeneID" id="395170"/>
<dbReference type="KEGG" id="gga:395170"/>
<dbReference type="CTD" id="388531"/>
<dbReference type="VEuPathDB" id="HostDB:geneid_395170"/>
<dbReference type="eggNOG" id="ENOG502QT8D">
    <property type="taxonomic scope" value="Eukaryota"/>
</dbReference>
<dbReference type="HOGENOM" id="CLU_093021_0_0_1"/>
<dbReference type="InParanoid" id="Q6XK22"/>
<dbReference type="OMA" id="SQMMEEM"/>
<dbReference type="OrthoDB" id="6358515at2759"/>
<dbReference type="PhylomeDB" id="Q6XK22"/>
<dbReference type="TreeFam" id="TF331562"/>
<dbReference type="PRO" id="PR:Q6XK22"/>
<dbReference type="Proteomes" id="UP000000539">
    <property type="component" value="Chromosome 11"/>
</dbReference>
<dbReference type="Bgee" id="ENSGALG00000004675">
    <property type="expression patterns" value="Expressed in cerebellum and 12 other cell types or tissues"/>
</dbReference>
<dbReference type="GO" id="GO:0016020">
    <property type="term" value="C:membrane"/>
    <property type="evidence" value="ECO:0007669"/>
    <property type="project" value="UniProtKB-SubCell"/>
</dbReference>
<dbReference type="GO" id="GO:0043005">
    <property type="term" value="C:neuron projection"/>
    <property type="evidence" value="ECO:0000318"/>
    <property type="project" value="GO_Central"/>
</dbReference>
<dbReference type="GO" id="GO:0050908">
    <property type="term" value="P:detection of light stimulus involved in visual perception"/>
    <property type="evidence" value="ECO:0000318"/>
    <property type="project" value="GO_Central"/>
</dbReference>
<dbReference type="GO" id="GO:0007186">
    <property type="term" value="P:G protein-coupled receptor signaling pathway"/>
    <property type="evidence" value="ECO:0000318"/>
    <property type="project" value="GO_Central"/>
</dbReference>
<dbReference type="GO" id="GO:0009968">
    <property type="term" value="P:negative regulation of signal transduction"/>
    <property type="evidence" value="ECO:0007669"/>
    <property type="project" value="UniProtKB-KW"/>
</dbReference>
<dbReference type="InterPro" id="IPR026512">
    <property type="entry name" value="RGS7BP/RGS9BP"/>
</dbReference>
<dbReference type="PANTHER" id="PTHR21029">
    <property type="entry name" value="R-SEVEN BINDING PROTEIN (R7BP) HOMOLOG"/>
    <property type="match status" value="1"/>
</dbReference>
<gene>
    <name type="primary">RGS9BP</name>
    <name type="synonym">R9AP</name>
</gene>
<proteinExistence type="evidence at transcript level"/>
<feature type="chain" id="PRO_0000287588" description="Regulator of G-protein signaling 9-binding protein">
    <location>
        <begin position="1"/>
        <end position="237"/>
    </location>
</feature>
<feature type="topological domain" description="Cytoplasmic" evidence="2">
    <location>
        <begin position="1"/>
        <end position="212"/>
    </location>
</feature>
<feature type="transmembrane region" description="Helical; Anchor for type IV membrane protein" evidence="2">
    <location>
        <begin position="213"/>
        <end position="233"/>
    </location>
</feature>
<feature type="topological domain" description="Extracellular" evidence="2">
    <location>
        <begin position="234"/>
        <end position="237"/>
    </location>
</feature>
<feature type="coiled-coil region" evidence="2">
    <location>
        <begin position="29"/>
        <end position="58"/>
    </location>
</feature>
<feature type="coiled-coil region" evidence="2">
    <location>
        <begin position="135"/>
        <end position="169"/>
    </location>
</feature>
<reference key="1">
    <citation type="journal article" date="2003" name="Mol. Cell. Neurosci.">
        <title>Expression patterns of the RGS9-1 anchoring protein R9AP in the chicken and mouse suggest multiple roles in the nervous system.</title>
        <authorList>
            <person name="Keresztes G."/>
            <person name="Mutai H."/>
            <person name="Hibino H."/>
            <person name="Hudspeth A.J."/>
            <person name="Heller S."/>
        </authorList>
    </citation>
    <scope>NUCLEOTIDE SEQUENCE [MRNA]</scope>
    <scope>TISSUE SPECIFICITY</scope>
    <source>
        <tissue>Inner ear</tissue>
    </source>
</reference>
<organism>
    <name type="scientific">Gallus gallus</name>
    <name type="common">Chicken</name>
    <dbReference type="NCBI Taxonomy" id="9031"/>
    <lineage>
        <taxon>Eukaryota</taxon>
        <taxon>Metazoa</taxon>
        <taxon>Chordata</taxon>
        <taxon>Craniata</taxon>
        <taxon>Vertebrata</taxon>
        <taxon>Euteleostomi</taxon>
        <taxon>Archelosauria</taxon>
        <taxon>Archosauria</taxon>
        <taxon>Dinosauria</taxon>
        <taxon>Saurischia</taxon>
        <taxon>Theropoda</taxon>
        <taxon>Coelurosauria</taxon>
        <taxon>Aves</taxon>
        <taxon>Neognathae</taxon>
        <taxon>Galloanserae</taxon>
        <taxon>Galliformes</taxon>
        <taxon>Phasianidae</taxon>
        <taxon>Phasianinae</taxon>
        <taxon>Gallus</taxon>
    </lineage>
</organism>
<protein>
    <recommendedName>
        <fullName>Regulator of G-protein signaling 9-binding protein</fullName>
    </recommendedName>
    <alternativeName>
        <fullName>RGS9-anchor protein</fullName>
    </alternativeName>
</protein>
<name>R9BP_CHICK</name>